<keyword id="KW-0456">Lyase</keyword>
<sequence length="261" mass="29249">MNYKQSSPEVLRQLIRDGELVGHTSGMAEGYIQANVVILPSKYAYDFLKFCFRNPKTCPLLDVSEVGAHSFPYYGPYADIRTDVPKYRIYEHGQLIKEVDDITDLYTEDMVSFLIGCSFTFEHALLEAGLPVRHIEEGHNVPMYRTNIPAESSGYFKGNITVSMRPMTMTQAIKATEITSHFKNVHGTPIHIGTPEELGITDIDKPDYGEAVTIKPNEMPVFWGCGVTPQSVALDAKPELMITHSPGHMFITDIKDSELND</sequence>
<organism>
    <name type="scientific">Staphylococcus haemolyticus (strain JCSC1435)</name>
    <dbReference type="NCBI Taxonomy" id="279808"/>
    <lineage>
        <taxon>Bacteria</taxon>
        <taxon>Bacillati</taxon>
        <taxon>Bacillota</taxon>
        <taxon>Bacilli</taxon>
        <taxon>Bacillales</taxon>
        <taxon>Staphylococcaceae</taxon>
        <taxon>Staphylococcus</taxon>
    </lineage>
</organism>
<proteinExistence type="inferred from homology"/>
<comment type="similarity">
    <text evidence="1">Belongs to the D-glutamate cyclase family.</text>
</comment>
<feature type="chain" id="PRO_0000379867" description="Putative hydro-lyase SH0274">
    <location>
        <begin position="1"/>
        <end position="261"/>
    </location>
</feature>
<accession>Q4L9U2</accession>
<gene>
    <name type="ordered locus">SH0274</name>
</gene>
<dbReference type="EC" id="4.2.1.-" evidence="1"/>
<dbReference type="EMBL" id="AP006716">
    <property type="protein sequence ID" value="BAE03583.1"/>
    <property type="molecule type" value="Genomic_DNA"/>
</dbReference>
<dbReference type="RefSeq" id="WP_011274603.1">
    <property type="nucleotide sequence ID" value="NC_007168.1"/>
</dbReference>
<dbReference type="SMR" id="Q4L9U2"/>
<dbReference type="KEGG" id="sha:SH0274"/>
<dbReference type="eggNOG" id="COG4336">
    <property type="taxonomic scope" value="Bacteria"/>
</dbReference>
<dbReference type="HOGENOM" id="CLU_059759_0_0_9"/>
<dbReference type="OrthoDB" id="149585at2"/>
<dbReference type="Proteomes" id="UP000000543">
    <property type="component" value="Chromosome"/>
</dbReference>
<dbReference type="GO" id="GO:0016829">
    <property type="term" value="F:lyase activity"/>
    <property type="evidence" value="ECO:0007669"/>
    <property type="project" value="UniProtKB-KW"/>
</dbReference>
<dbReference type="FunFam" id="3.30.2040.10:FF:000001">
    <property type="entry name" value="D-glutamate cyclase, mitochondrial"/>
    <property type="match status" value="1"/>
</dbReference>
<dbReference type="Gene3D" id="3.40.1640.10">
    <property type="entry name" value="PSTPO5379-like"/>
    <property type="match status" value="1"/>
</dbReference>
<dbReference type="Gene3D" id="3.30.2040.10">
    <property type="entry name" value="PSTPO5379-like domain"/>
    <property type="match status" value="1"/>
</dbReference>
<dbReference type="HAMAP" id="MF_01830">
    <property type="entry name" value="Hydro_lyase"/>
    <property type="match status" value="1"/>
</dbReference>
<dbReference type="InterPro" id="IPR009906">
    <property type="entry name" value="D-Glu_cyclase"/>
</dbReference>
<dbReference type="InterPro" id="IPR038021">
    <property type="entry name" value="Putative_hydro-lyase"/>
</dbReference>
<dbReference type="InterPro" id="IPR016938">
    <property type="entry name" value="UPF0317"/>
</dbReference>
<dbReference type="NCBIfam" id="NF003969">
    <property type="entry name" value="PRK05463.1"/>
    <property type="match status" value="1"/>
</dbReference>
<dbReference type="PANTHER" id="PTHR32022">
    <property type="entry name" value="D-GLUTAMATE CYCLASE, MITOCHONDRIAL"/>
    <property type="match status" value="1"/>
</dbReference>
<dbReference type="PANTHER" id="PTHR32022:SF10">
    <property type="entry name" value="D-GLUTAMATE CYCLASE, MITOCHONDRIAL"/>
    <property type="match status" value="1"/>
</dbReference>
<dbReference type="Pfam" id="PF07286">
    <property type="entry name" value="D-Glu_cyclase"/>
    <property type="match status" value="1"/>
</dbReference>
<dbReference type="PIRSF" id="PIRSF029755">
    <property type="entry name" value="UCP029755"/>
    <property type="match status" value="1"/>
</dbReference>
<dbReference type="SUPFAM" id="SSF160920">
    <property type="entry name" value="PSTPO5379-like"/>
    <property type="match status" value="1"/>
</dbReference>
<name>Y274_STAHJ</name>
<reference key="1">
    <citation type="journal article" date="2005" name="J. Bacteriol.">
        <title>Whole-genome sequencing of Staphylococcus haemolyticus uncovers the extreme plasticity of its genome and the evolution of human-colonizing staphylococcal species.</title>
        <authorList>
            <person name="Takeuchi F."/>
            <person name="Watanabe S."/>
            <person name="Baba T."/>
            <person name="Yuzawa H."/>
            <person name="Ito T."/>
            <person name="Morimoto Y."/>
            <person name="Kuroda M."/>
            <person name="Cui L."/>
            <person name="Takahashi M."/>
            <person name="Ankai A."/>
            <person name="Baba S."/>
            <person name="Fukui S."/>
            <person name="Lee J.C."/>
            <person name="Hiramatsu K."/>
        </authorList>
    </citation>
    <scope>NUCLEOTIDE SEQUENCE [LARGE SCALE GENOMIC DNA]</scope>
    <source>
        <strain>JCSC1435</strain>
    </source>
</reference>
<evidence type="ECO:0000255" key="1">
    <source>
        <dbReference type="HAMAP-Rule" id="MF_01830"/>
    </source>
</evidence>
<protein>
    <recommendedName>
        <fullName evidence="1">Putative hydro-lyase SH0274</fullName>
        <ecNumber evidence="1">4.2.1.-</ecNumber>
    </recommendedName>
</protein>